<organism>
    <name type="scientific">Pectobacterium parmentieri</name>
    <dbReference type="NCBI Taxonomy" id="1905730"/>
    <lineage>
        <taxon>Bacteria</taxon>
        <taxon>Pseudomonadati</taxon>
        <taxon>Pseudomonadota</taxon>
        <taxon>Gammaproteobacteria</taxon>
        <taxon>Enterobacterales</taxon>
        <taxon>Pectobacteriaceae</taxon>
        <taxon>Pectobacterium</taxon>
    </lineage>
</organism>
<dbReference type="EC" id="3.1.1.11"/>
<dbReference type="EMBL" id="CP003415">
    <property type="protein sequence ID" value="AFI92651.1"/>
    <property type="molecule type" value="Genomic_DNA"/>
</dbReference>
<dbReference type="EMBL" id="X80475">
    <property type="status" value="NOT_ANNOTATED_CDS"/>
    <property type="molecule type" value="Genomic_DNA"/>
</dbReference>
<dbReference type="RefSeq" id="WP_014702023.1">
    <property type="nucleotide sequence ID" value="NZ_WABS01000037.1"/>
</dbReference>
<dbReference type="SMR" id="P55743"/>
<dbReference type="STRING" id="1905730.W5S_4605"/>
<dbReference type="KEGG" id="pec:W5S_4605"/>
<dbReference type="PATRIC" id="fig|1166016.3.peg.4667"/>
<dbReference type="eggNOG" id="COG4677">
    <property type="taxonomic scope" value="Bacteria"/>
</dbReference>
<dbReference type="HOGENOM" id="CLU_012243_5_0_6"/>
<dbReference type="UniPathway" id="UPA00545">
    <property type="reaction ID" value="UER00823"/>
</dbReference>
<dbReference type="Proteomes" id="UP000008044">
    <property type="component" value="Chromosome"/>
</dbReference>
<dbReference type="GO" id="GO:0009279">
    <property type="term" value="C:cell outer membrane"/>
    <property type="evidence" value="ECO:0007669"/>
    <property type="project" value="TreeGrafter"/>
</dbReference>
<dbReference type="GO" id="GO:0030599">
    <property type="term" value="F:pectinesterase activity"/>
    <property type="evidence" value="ECO:0007669"/>
    <property type="project" value="UniProtKB-EC"/>
</dbReference>
<dbReference type="GO" id="GO:0042545">
    <property type="term" value="P:cell wall modification"/>
    <property type="evidence" value="ECO:0007669"/>
    <property type="project" value="InterPro"/>
</dbReference>
<dbReference type="GO" id="GO:0045490">
    <property type="term" value="P:pectin catabolic process"/>
    <property type="evidence" value="ECO:0007669"/>
    <property type="project" value="UniProtKB-UniPathway"/>
</dbReference>
<dbReference type="Gene3D" id="2.160.20.10">
    <property type="entry name" value="Single-stranded right-handed beta-helix, Pectin lyase-like"/>
    <property type="match status" value="1"/>
</dbReference>
<dbReference type="InterPro" id="IPR012334">
    <property type="entry name" value="Pectin_lyas_fold"/>
</dbReference>
<dbReference type="InterPro" id="IPR011050">
    <property type="entry name" value="Pectin_lyase_fold/virulence"/>
</dbReference>
<dbReference type="InterPro" id="IPR054974">
    <property type="entry name" value="Pectinest_B"/>
</dbReference>
<dbReference type="InterPro" id="IPR033131">
    <property type="entry name" value="Pectinesterase_Asp_AS"/>
</dbReference>
<dbReference type="InterPro" id="IPR000070">
    <property type="entry name" value="Pectinesterase_cat"/>
</dbReference>
<dbReference type="NCBIfam" id="NF041901">
    <property type="entry name" value="pecestase_PemB"/>
    <property type="match status" value="1"/>
</dbReference>
<dbReference type="NCBIfam" id="NF007822">
    <property type="entry name" value="PRK10531.1"/>
    <property type="match status" value="1"/>
</dbReference>
<dbReference type="PANTHER" id="PTHR31321">
    <property type="entry name" value="ACYL-COA THIOESTER HYDROLASE YBHC-RELATED"/>
    <property type="match status" value="1"/>
</dbReference>
<dbReference type="PANTHER" id="PTHR31321:SF57">
    <property type="entry name" value="PECTINESTERASE 53-RELATED"/>
    <property type="match status" value="1"/>
</dbReference>
<dbReference type="Pfam" id="PF01095">
    <property type="entry name" value="Pectinesterase"/>
    <property type="match status" value="1"/>
</dbReference>
<dbReference type="SUPFAM" id="SSF51126">
    <property type="entry name" value="Pectin lyase-like"/>
    <property type="match status" value="1"/>
</dbReference>
<dbReference type="PROSITE" id="PS00503">
    <property type="entry name" value="PECTINESTERASE_2"/>
    <property type="match status" value="1"/>
</dbReference>
<feature type="chain" id="PRO_0000215046" description="Pectinesterase B">
    <location>
        <begin position="1"/>
        <end position="400"/>
    </location>
</feature>
<feature type="active site" description="Proton donor" evidence="2">
    <location>
        <position position="228"/>
    </location>
</feature>
<feature type="active site" description="Nucleophile" evidence="2">
    <location>
        <position position="261"/>
    </location>
</feature>
<feature type="binding site" evidence="1">
    <location>
        <position position="171"/>
    </location>
    <ligand>
        <name>substrate</name>
    </ligand>
</feature>
<feature type="binding site" evidence="1">
    <location>
        <position position="205"/>
    </location>
    <ligand>
        <name>substrate</name>
    </ligand>
</feature>
<feature type="binding site" evidence="1">
    <location>
        <position position="325"/>
    </location>
    <ligand>
        <name>substrate</name>
    </ligand>
</feature>
<feature type="binding site" evidence="1">
    <location>
        <position position="327"/>
    </location>
    <ligand>
        <name>substrate</name>
    </ligand>
</feature>
<feature type="site" description="Transition state stabilizer" evidence="1">
    <location>
        <position position="227"/>
    </location>
</feature>
<feature type="sequence conflict" description="In Ref. 2; X80475." evidence="3" ref="2">
    <original>L</original>
    <variation>R</variation>
    <location>
        <position position="223"/>
    </location>
</feature>
<evidence type="ECO:0000250" key="1"/>
<evidence type="ECO:0000255" key="2">
    <source>
        <dbReference type="PROSITE-ProRule" id="PRU10040"/>
    </source>
</evidence>
<evidence type="ECO:0000305" key="3"/>
<proteinExistence type="inferred from homology"/>
<gene>
    <name type="primary">pemB</name>
    <name type="ordered locus">W5S_4605</name>
</gene>
<keyword id="KW-0063">Aspartyl esterase</keyword>
<keyword id="KW-0378">Hydrolase</keyword>
<reference key="1">
    <citation type="journal article" date="2012" name="J. Bacteriol.">
        <title>Genome sequence of Pectobacterium sp. strain SCC3193.</title>
        <authorList>
            <person name="Koskinen J.P."/>
            <person name="Laine P."/>
            <person name="Niemi O."/>
            <person name="Nykyri J."/>
            <person name="Harjunpaa H."/>
            <person name="Auvinen P."/>
            <person name="Paulin L."/>
            <person name="Pirhonen M."/>
            <person name="Palva T."/>
            <person name="Holm L."/>
        </authorList>
    </citation>
    <scope>NUCLEOTIDE SEQUENCE [LARGE SCALE GENOMIC DNA]</scope>
    <source>
        <strain>SCC3193</strain>
    </source>
</reference>
<reference key="2">
    <citation type="submission" date="1994-12" db="EMBL/GenBank/DDBJ databases">
        <authorList>
            <person name="Heikinheimo R."/>
            <person name="Mae A."/>
            <person name="Flego D."/>
            <person name="Pirhonen M."/>
            <person name="Koiv V."/>
            <person name="Palva E.T."/>
        </authorList>
    </citation>
    <scope>NUCLEOTIDE SEQUENCE [GENOMIC DNA] OF 223-400</scope>
    <source>
        <strain>SCC3193</strain>
    </source>
</reference>
<protein>
    <recommendedName>
        <fullName>Pectinesterase B</fullName>
        <shortName>PE B</shortName>
        <ecNumber>3.1.1.11</ecNumber>
    </recommendedName>
    <alternativeName>
        <fullName>Pectin methylesterase B</fullName>
    </alternativeName>
</protein>
<name>PMEB_PECPM</name>
<accession>P55743</accession>
<accession>K4FUN6</accession>
<comment type="catalytic activity">
    <reaction>
        <text>[(1-&gt;4)-alpha-D-galacturonosyl methyl ester](n) + n H2O = [(1-&gt;4)-alpha-D-galacturonosyl](n) + n methanol + n H(+)</text>
        <dbReference type="Rhea" id="RHEA:22380"/>
        <dbReference type="Rhea" id="RHEA-COMP:14570"/>
        <dbReference type="Rhea" id="RHEA-COMP:14573"/>
        <dbReference type="ChEBI" id="CHEBI:15377"/>
        <dbReference type="ChEBI" id="CHEBI:15378"/>
        <dbReference type="ChEBI" id="CHEBI:17790"/>
        <dbReference type="ChEBI" id="CHEBI:140522"/>
        <dbReference type="ChEBI" id="CHEBI:140523"/>
        <dbReference type="EC" id="3.1.1.11"/>
    </reaction>
</comment>
<comment type="pathway">
    <text>Glycan metabolism; pectin degradation; 2-dehydro-3-deoxy-D-gluconate from pectin: step 1/5.</text>
</comment>
<comment type="similarity">
    <text evidence="3">Belongs to the pectinesterase family.</text>
</comment>
<sequence length="400" mass="44446">MTKTTYPGTAYRPILSEQEADRFTLPHYFTRRGHDGHSDTDVWQPTSIEVDPATPWVVGPQVGVDGATHGTVQQAVNAALRAQQDRPCIDIKLLPGIYTGAVYIPADAPPLTLFGTGEQPNDVVIQLALDSMFSPATYRETVNSHGEYQPGDPAWYMYDLCASKQNATIDTICAAVVWSQSDNLQMKNLTVVNALLDSVDGRAHQAVALRTDGDKIQLERVRLIGRQDTFFVNTSNLRNEYVTDRYSRAYIKDSYIEGDVDYVFGRATAVFDRVHFHTVSSRGAKDIHVFAPDSMPWAQYGFLAVSCRFTGDEGFSGGRKAKLGRAWDQGARQTGYQPNKTANGQLVIRDSTIDASYDREQPWGVAATTARPFAGNVDSARNLDDVQFNRLWEYNNIDEV</sequence>